<organism>
    <name type="scientific">Bacillus subtilis (strain 168)</name>
    <dbReference type="NCBI Taxonomy" id="224308"/>
    <lineage>
        <taxon>Bacteria</taxon>
        <taxon>Bacillati</taxon>
        <taxon>Bacillota</taxon>
        <taxon>Bacilli</taxon>
        <taxon>Bacillales</taxon>
        <taxon>Bacillaceae</taxon>
        <taxon>Bacillus</taxon>
    </lineage>
</organism>
<comment type="function">
    <text evidence="1">Releases the supercoiling and torsional tension of DNA, which is introduced during the DNA replication and transcription, by transiently cleaving and rejoining one strand of the DNA duplex. Introduces a single-strand break via transesterification at a target site in duplex DNA. The scissile phosphodiester is attacked by the catalytic tyrosine of the enzyme, resulting in the formation of a DNA-(5'-phosphotyrosyl)-enzyme intermediate and the expulsion of a 3'-OH DNA strand. The free DNA strand then undergoes passage around the unbroken strand, thus removing DNA supercoils. Finally, in the religation step, the DNA 3'-OH attacks the covalent intermediate to expel the active-site tyrosine and restore the DNA phosphodiester backbone.</text>
</comment>
<comment type="catalytic activity">
    <reaction evidence="1">
        <text>ATP-independent breakage of single-stranded DNA, followed by passage and rejoining.</text>
        <dbReference type="EC" id="5.6.2.1"/>
    </reaction>
</comment>
<comment type="cofactor">
    <cofactor evidence="1">
        <name>Mg(2+)</name>
        <dbReference type="ChEBI" id="CHEBI:18420"/>
    </cofactor>
</comment>
<comment type="similarity">
    <text evidence="1 2">Belongs to the type IA topoisomerase family.</text>
</comment>
<evidence type="ECO:0000255" key="1">
    <source>
        <dbReference type="HAMAP-Rule" id="MF_00953"/>
    </source>
</evidence>
<evidence type="ECO:0000255" key="2">
    <source>
        <dbReference type="PROSITE-ProRule" id="PRU01383"/>
    </source>
</evidence>
<evidence type="ECO:0000256" key="3">
    <source>
        <dbReference type="SAM" id="MobiDB-lite"/>
    </source>
</evidence>
<dbReference type="EC" id="5.6.2.1" evidence="1"/>
<dbReference type="EMBL" id="AB001488">
    <property type="protein sequence ID" value="BAA19263.1"/>
    <property type="molecule type" value="Genomic_DNA"/>
</dbReference>
<dbReference type="EMBL" id="AL009126">
    <property type="protein sequence ID" value="CAB12233.1"/>
    <property type="molecule type" value="Genomic_DNA"/>
</dbReference>
<dbReference type="PIR" id="H69724">
    <property type="entry name" value="H69724"/>
</dbReference>
<dbReference type="RefSeq" id="NP_388307.1">
    <property type="nucleotide sequence ID" value="NC_000964.3"/>
</dbReference>
<dbReference type="RefSeq" id="WP_003246684.1">
    <property type="nucleotide sequence ID" value="NZ_OZ025638.1"/>
</dbReference>
<dbReference type="SMR" id="P96583"/>
<dbReference type="FunCoup" id="P96583">
    <property type="interactions" value="270"/>
</dbReference>
<dbReference type="STRING" id="224308.BSU04260"/>
<dbReference type="BindingDB" id="P96583"/>
<dbReference type="ChEMBL" id="CHEMBL4320"/>
<dbReference type="jPOST" id="P96583"/>
<dbReference type="PaxDb" id="224308-BSU04260"/>
<dbReference type="EnsemblBacteria" id="CAB12233">
    <property type="protein sequence ID" value="CAB12233"/>
    <property type="gene ID" value="BSU_04260"/>
</dbReference>
<dbReference type="GeneID" id="938247"/>
<dbReference type="KEGG" id="bsu:BSU04260"/>
<dbReference type="PATRIC" id="fig|224308.179.peg.452"/>
<dbReference type="eggNOG" id="COG0550">
    <property type="taxonomic scope" value="Bacteria"/>
</dbReference>
<dbReference type="eggNOG" id="COG0551">
    <property type="taxonomic scope" value="Bacteria"/>
</dbReference>
<dbReference type="InParanoid" id="P96583"/>
<dbReference type="OrthoDB" id="9803554at2"/>
<dbReference type="PhylomeDB" id="P96583"/>
<dbReference type="BioCyc" id="BSUB:BSU04260-MONOMER"/>
<dbReference type="PRO" id="PR:P96583"/>
<dbReference type="Proteomes" id="UP000001570">
    <property type="component" value="Chromosome"/>
</dbReference>
<dbReference type="GO" id="GO:0043597">
    <property type="term" value="C:cytoplasmic replication fork"/>
    <property type="evidence" value="ECO:0000318"/>
    <property type="project" value="GO_Central"/>
</dbReference>
<dbReference type="GO" id="GO:0003677">
    <property type="term" value="F:DNA binding"/>
    <property type="evidence" value="ECO:0007669"/>
    <property type="project" value="UniProtKB-KW"/>
</dbReference>
<dbReference type="GO" id="GO:0003917">
    <property type="term" value="F:DNA topoisomerase type I (single strand cut, ATP-independent) activity"/>
    <property type="evidence" value="ECO:0000318"/>
    <property type="project" value="GO_Central"/>
</dbReference>
<dbReference type="GO" id="GO:0000287">
    <property type="term" value="F:magnesium ion binding"/>
    <property type="evidence" value="ECO:0007669"/>
    <property type="project" value="UniProtKB-UniRule"/>
</dbReference>
<dbReference type="GO" id="GO:0006310">
    <property type="term" value="P:DNA recombination"/>
    <property type="evidence" value="ECO:0000318"/>
    <property type="project" value="GO_Central"/>
</dbReference>
<dbReference type="GO" id="GO:0006281">
    <property type="term" value="P:DNA repair"/>
    <property type="evidence" value="ECO:0000318"/>
    <property type="project" value="GO_Central"/>
</dbReference>
<dbReference type="GO" id="GO:0006265">
    <property type="term" value="P:DNA topological change"/>
    <property type="evidence" value="ECO:0000318"/>
    <property type="project" value="GO_Central"/>
</dbReference>
<dbReference type="CDD" id="cd00186">
    <property type="entry name" value="TOP1Ac"/>
    <property type="match status" value="1"/>
</dbReference>
<dbReference type="CDD" id="cd03362">
    <property type="entry name" value="TOPRIM_TopoIA_TopoIII"/>
    <property type="match status" value="1"/>
</dbReference>
<dbReference type="Gene3D" id="3.40.50.140">
    <property type="match status" value="1"/>
</dbReference>
<dbReference type="Gene3D" id="1.10.460.10">
    <property type="entry name" value="Topoisomerase I, domain 2"/>
    <property type="match status" value="1"/>
</dbReference>
<dbReference type="Gene3D" id="2.70.20.10">
    <property type="entry name" value="Topoisomerase I, domain 3"/>
    <property type="match status" value="1"/>
</dbReference>
<dbReference type="Gene3D" id="1.10.290.10">
    <property type="entry name" value="Topoisomerase I, domain 4"/>
    <property type="match status" value="1"/>
</dbReference>
<dbReference type="HAMAP" id="MF_00953">
    <property type="entry name" value="Topoisom_3_prok"/>
    <property type="match status" value="1"/>
</dbReference>
<dbReference type="InterPro" id="IPR000380">
    <property type="entry name" value="Topo_IA"/>
</dbReference>
<dbReference type="InterPro" id="IPR003601">
    <property type="entry name" value="Topo_IA_2"/>
</dbReference>
<dbReference type="InterPro" id="IPR023406">
    <property type="entry name" value="Topo_IA_AS"/>
</dbReference>
<dbReference type="InterPro" id="IPR013497">
    <property type="entry name" value="Topo_IA_cen"/>
</dbReference>
<dbReference type="InterPro" id="IPR013824">
    <property type="entry name" value="Topo_IA_cen_sub1"/>
</dbReference>
<dbReference type="InterPro" id="IPR013825">
    <property type="entry name" value="Topo_IA_cen_sub2"/>
</dbReference>
<dbReference type="InterPro" id="IPR013826">
    <property type="entry name" value="Topo_IA_cen_sub3"/>
</dbReference>
<dbReference type="InterPro" id="IPR023405">
    <property type="entry name" value="Topo_IA_core_domain"/>
</dbReference>
<dbReference type="InterPro" id="IPR003602">
    <property type="entry name" value="Topo_IA_DNA-bd_dom"/>
</dbReference>
<dbReference type="InterPro" id="IPR005738">
    <property type="entry name" value="TopoIII"/>
</dbReference>
<dbReference type="InterPro" id="IPR006171">
    <property type="entry name" value="TOPRIM_dom"/>
</dbReference>
<dbReference type="InterPro" id="IPR034144">
    <property type="entry name" value="TOPRIM_TopoIII"/>
</dbReference>
<dbReference type="NCBIfam" id="NF005829">
    <property type="entry name" value="PRK07726.1"/>
    <property type="match status" value="1"/>
</dbReference>
<dbReference type="NCBIfam" id="TIGR01056">
    <property type="entry name" value="topB"/>
    <property type="match status" value="1"/>
</dbReference>
<dbReference type="PANTHER" id="PTHR11390:SF21">
    <property type="entry name" value="DNA TOPOISOMERASE 3-ALPHA"/>
    <property type="match status" value="1"/>
</dbReference>
<dbReference type="PANTHER" id="PTHR11390">
    <property type="entry name" value="PROKARYOTIC DNA TOPOISOMERASE"/>
    <property type="match status" value="1"/>
</dbReference>
<dbReference type="Pfam" id="PF01131">
    <property type="entry name" value="Topoisom_bac"/>
    <property type="match status" value="1"/>
</dbReference>
<dbReference type="Pfam" id="PF01751">
    <property type="entry name" value="Toprim"/>
    <property type="match status" value="1"/>
</dbReference>
<dbReference type="PRINTS" id="PR00417">
    <property type="entry name" value="PRTPISMRASEI"/>
</dbReference>
<dbReference type="SMART" id="SM00437">
    <property type="entry name" value="TOP1Ac"/>
    <property type="match status" value="1"/>
</dbReference>
<dbReference type="SMART" id="SM00436">
    <property type="entry name" value="TOP1Bc"/>
    <property type="match status" value="1"/>
</dbReference>
<dbReference type="SMART" id="SM00493">
    <property type="entry name" value="TOPRIM"/>
    <property type="match status" value="1"/>
</dbReference>
<dbReference type="SUPFAM" id="SSF56712">
    <property type="entry name" value="Prokaryotic type I DNA topoisomerase"/>
    <property type="match status" value="1"/>
</dbReference>
<dbReference type="PROSITE" id="PS00396">
    <property type="entry name" value="TOPO_IA_1"/>
    <property type="match status" value="1"/>
</dbReference>
<dbReference type="PROSITE" id="PS52039">
    <property type="entry name" value="TOPO_IA_2"/>
    <property type="match status" value="1"/>
</dbReference>
<dbReference type="PROSITE" id="PS50880">
    <property type="entry name" value="TOPRIM"/>
    <property type="match status" value="1"/>
</dbReference>
<name>TOP3_BACSU</name>
<feature type="chain" id="PRO_0000286366" description="DNA topoisomerase 3">
    <location>
        <begin position="1"/>
        <end position="727"/>
    </location>
</feature>
<feature type="domain" description="Toprim" evidence="1">
    <location>
        <begin position="3"/>
        <end position="136"/>
    </location>
</feature>
<feature type="domain" description="Topo IA-type catalytic" evidence="2">
    <location>
        <begin position="153"/>
        <end position="593"/>
    </location>
</feature>
<feature type="region of interest" description="Interaction with DNA" evidence="1">
    <location>
        <begin position="187"/>
        <end position="192"/>
    </location>
</feature>
<feature type="region of interest" description="Disordered" evidence="3">
    <location>
        <begin position="685"/>
        <end position="714"/>
    </location>
</feature>
<feature type="compositionally biased region" description="Basic and acidic residues" evidence="3">
    <location>
        <begin position="685"/>
        <end position="699"/>
    </location>
</feature>
<feature type="active site" description="O-(5'-phospho-DNA)-tyrosine intermediate" evidence="2">
    <location>
        <position position="310"/>
    </location>
</feature>
<feature type="binding site" evidence="1">
    <location>
        <position position="9"/>
    </location>
    <ligand>
        <name>Mg(2+)</name>
        <dbReference type="ChEBI" id="CHEBI:18420"/>
        <note>catalytic</note>
    </ligand>
</feature>
<feature type="binding site" evidence="1">
    <location>
        <position position="105"/>
    </location>
    <ligand>
        <name>Mg(2+)</name>
        <dbReference type="ChEBI" id="CHEBI:18420"/>
        <note>catalytic</note>
    </ligand>
</feature>
<feature type="site" description="Interaction with DNA" evidence="1">
    <location>
        <position position="61"/>
    </location>
</feature>
<feature type="site" description="Interaction with DNA" evidence="1">
    <location>
        <position position="168"/>
    </location>
</feature>
<feature type="site" description="Interaction with DNA" evidence="1">
    <location>
        <position position="176"/>
    </location>
</feature>
<feature type="site" description="Interaction with DNA" evidence="1">
    <location>
        <position position="312"/>
    </location>
</feature>
<sequence length="727" mass="81477">MSKTVVLAEKPSVGRDLARVLKCHKKGNGYLEGDQYIVTWALGHLVTLADPEGYGKEFQSWRLEDLPIIPEPLKLVVIKKTGKQFNAVKSQLTRKDVNQIVIATDAGREGELVARWIIEKANVRKPIKRLWISSVTDKAIKEGFQKLRSGKEYENLYHSAVARAEADWIVGINATRALTTKFNAQLSCGRVQTPTLAMIAKREADIQAFTPVPYYGIRAAVDGMTLTWQDKKSKQTRTFNQDVTSRLLKNLQGKQAVVAELKKTAKKSFAPALYDLTELQRDAHKRFGFSAKETLSVLQKLYEQHKLVTYPRTDSRFLSSDIVPTLKDRLEGMEVKPYAQYVSQIKKRGIKSHKGYVNDAKVSDHHAIIPTEEPLVLSSLSDKERKLYDLIAKRFLAVLMPAFEYEETKVIAEIGGETFTAKGKTVQSQGWKAVYDMAEEDDEQEDDRDQTLPALQKGDTLAVRTLTETSGQTKPPARFNEGTLLSAMENPSAFMQGEEKGLVKTLGETGGLGTVATRADIIEKLFNSFLIEKKGQDIFITSKGKQLLQLVPEDLKSPALTAEWEQKLSAIAAGKLKSAVFIKDMKAYAHQTVKEIKNSSQTFRHDNITGTACPECGKMMLKVNGKRGTMLVCQDRECGSRKTIARKTNARCPNCHKRMELRGQGEGQTFACVCGHREKLSVFEKRKNKDKARATKRDVSSYMKKQNKDEPINNALAEQLKKLGLDK</sequence>
<gene>
    <name evidence="1" type="primary">topB</name>
    <name type="ordered locus">BSU04260</name>
</gene>
<accession>P96583</accession>
<accession>Q797M6</accession>
<reference key="1">
    <citation type="submission" date="1997-03" db="EMBL/GenBank/DDBJ databases">
        <title>A 148 kbp sequence of the region between 35 and 47 degree of the Bacillus subtilis genome.</title>
        <authorList>
            <person name="Kasahara Y."/>
            <person name="Nakai S."/>
            <person name="Lee S."/>
            <person name="Sadaie Y."/>
            <person name="Ogasawara N."/>
        </authorList>
    </citation>
    <scope>NUCLEOTIDE SEQUENCE [GENOMIC DNA]</scope>
    <source>
        <strain>168</strain>
    </source>
</reference>
<reference key="2">
    <citation type="journal article" date="1997" name="Nature">
        <title>The complete genome sequence of the Gram-positive bacterium Bacillus subtilis.</title>
        <authorList>
            <person name="Kunst F."/>
            <person name="Ogasawara N."/>
            <person name="Moszer I."/>
            <person name="Albertini A.M."/>
            <person name="Alloni G."/>
            <person name="Azevedo V."/>
            <person name="Bertero M.G."/>
            <person name="Bessieres P."/>
            <person name="Bolotin A."/>
            <person name="Borchert S."/>
            <person name="Borriss R."/>
            <person name="Boursier L."/>
            <person name="Brans A."/>
            <person name="Braun M."/>
            <person name="Brignell S.C."/>
            <person name="Bron S."/>
            <person name="Brouillet S."/>
            <person name="Bruschi C.V."/>
            <person name="Caldwell B."/>
            <person name="Capuano V."/>
            <person name="Carter N.M."/>
            <person name="Choi S.-K."/>
            <person name="Codani J.-J."/>
            <person name="Connerton I.F."/>
            <person name="Cummings N.J."/>
            <person name="Daniel R.A."/>
            <person name="Denizot F."/>
            <person name="Devine K.M."/>
            <person name="Duesterhoeft A."/>
            <person name="Ehrlich S.D."/>
            <person name="Emmerson P.T."/>
            <person name="Entian K.-D."/>
            <person name="Errington J."/>
            <person name="Fabret C."/>
            <person name="Ferrari E."/>
            <person name="Foulger D."/>
            <person name="Fritz C."/>
            <person name="Fujita M."/>
            <person name="Fujita Y."/>
            <person name="Fuma S."/>
            <person name="Galizzi A."/>
            <person name="Galleron N."/>
            <person name="Ghim S.-Y."/>
            <person name="Glaser P."/>
            <person name="Goffeau A."/>
            <person name="Golightly E.J."/>
            <person name="Grandi G."/>
            <person name="Guiseppi G."/>
            <person name="Guy B.J."/>
            <person name="Haga K."/>
            <person name="Haiech J."/>
            <person name="Harwood C.R."/>
            <person name="Henaut A."/>
            <person name="Hilbert H."/>
            <person name="Holsappel S."/>
            <person name="Hosono S."/>
            <person name="Hullo M.-F."/>
            <person name="Itaya M."/>
            <person name="Jones L.-M."/>
            <person name="Joris B."/>
            <person name="Karamata D."/>
            <person name="Kasahara Y."/>
            <person name="Klaerr-Blanchard M."/>
            <person name="Klein C."/>
            <person name="Kobayashi Y."/>
            <person name="Koetter P."/>
            <person name="Koningstein G."/>
            <person name="Krogh S."/>
            <person name="Kumano M."/>
            <person name="Kurita K."/>
            <person name="Lapidus A."/>
            <person name="Lardinois S."/>
            <person name="Lauber J."/>
            <person name="Lazarevic V."/>
            <person name="Lee S.-M."/>
            <person name="Levine A."/>
            <person name="Liu H."/>
            <person name="Masuda S."/>
            <person name="Mauel C."/>
            <person name="Medigue C."/>
            <person name="Medina N."/>
            <person name="Mellado R.P."/>
            <person name="Mizuno M."/>
            <person name="Moestl D."/>
            <person name="Nakai S."/>
            <person name="Noback M."/>
            <person name="Noone D."/>
            <person name="O'Reilly M."/>
            <person name="Ogawa K."/>
            <person name="Ogiwara A."/>
            <person name="Oudega B."/>
            <person name="Park S.-H."/>
            <person name="Parro V."/>
            <person name="Pohl T.M."/>
            <person name="Portetelle D."/>
            <person name="Porwollik S."/>
            <person name="Prescott A.M."/>
            <person name="Presecan E."/>
            <person name="Pujic P."/>
            <person name="Purnelle B."/>
            <person name="Rapoport G."/>
            <person name="Rey M."/>
            <person name="Reynolds S."/>
            <person name="Rieger M."/>
            <person name="Rivolta C."/>
            <person name="Rocha E."/>
            <person name="Roche B."/>
            <person name="Rose M."/>
            <person name="Sadaie Y."/>
            <person name="Sato T."/>
            <person name="Scanlan E."/>
            <person name="Schleich S."/>
            <person name="Schroeter R."/>
            <person name="Scoffone F."/>
            <person name="Sekiguchi J."/>
            <person name="Sekowska A."/>
            <person name="Seror S.J."/>
            <person name="Serror P."/>
            <person name="Shin B.-S."/>
            <person name="Soldo B."/>
            <person name="Sorokin A."/>
            <person name="Tacconi E."/>
            <person name="Takagi T."/>
            <person name="Takahashi H."/>
            <person name="Takemaru K."/>
            <person name="Takeuchi M."/>
            <person name="Tamakoshi A."/>
            <person name="Tanaka T."/>
            <person name="Terpstra P."/>
            <person name="Tognoni A."/>
            <person name="Tosato V."/>
            <person name="Uchiyama S."/>
            <person name="Vandenbol M."/>
            <person name="Vannier F."/>
            <person name="Vassarotti A."/>
            <person name="Viari A."/>
            <person name="Wambutt R."/>
            <person name="Wedler E."/>
            <person name="Wedler H."/>
            <person name="Weitzenegger T."/>
            <person name="Winters P."/>
            <person name="Wipat A."/>
            <person name="Yamamoto H."/>
            <person name="Yamane K."/>
            <person name="Yasumoto K."/>
            <person name="Yata K."/>
            <person name="Yoshida K."/>
            <person name="Yoshikawa H.-F."/>
            <person name="Zumstein E."/>
            <person name="Yoshikawa H."/>
            <person name="Danchin A."/>
        </authorList>
    </citation>
    <scope>NUCLEOTIDE SEQUENCE [LARGE SCALE GENOMIC DNA]</scope>
    <source>
        <strain>168</strain>
    </source>
</reference>
<proteinExistence type="inferred from homology"/>
<keyword id="KW-0238">DNA-binding</keyword>
<keyword id="KW-0413">Isomerase</keyword>
<keyword id="KW-0460">Magnesium</keyword>
<keyword id="KW-0479">Metal-binding</keyword>
<keyword id="KW-1185">Reference proteome</keyword>
<keyword id="KW-0799">Topoisomerase</keyword>
<protein>
    <recommendedName>
        <fullName evidence="1">DNA topoisomerase 3</fullName>
        <ecNumber evidence="1">5.6.2.1</ecNumber>
    </recommendedName>
    <alternativeName>
        <fullName evidence="1">DNA topoisomerase III</fullName>
    </alternativeName>
</protein>